<proteinExistence type="inferred from homology"/>
<protein>
    <recommendedName>
        <fullName evidence="1">Threonine--tRNA ligase</fullName>
        <ecNumber evidence="1">6.1.1.3</ecNumber>
    </recommendedName>
    <alternativeName>
        <fullName evidence="1">Threonyl-tRNA synthetase</fullName>
        <shortName evidence="1">ThrRS</shortName>
    </alternativeName>
</protein>
<keyword id="KW-0030">Aminoacyl-tRNA synthetase</keyword>
<keyword id="KW-0067">ATP-binding</keyword>
<keyword id="KW-0963">Cytoplasm</keyword>
<keyword id="KW-0436">Ligase</keyword>
<keyword id="KW-0479">Metal-binding</keyword>
<keyword id="KW-0547">Nucleotide-binding</keyword>
<keyword id="KW-0648">Protein biosynthesis</keyword>
<keyword id="KW-1185">Reference proteome</keyword>
<keyword id="KW-0694">RNA-binding</keyword>
<keyword id="KW-0820">tRNA-binding</keyword>
<keyword id="KW-0862">Zinc</keyword>
<name>SYT_STAEQ</name>
<evidence type="ECO:0000255" key="1">
    <source>
        <dbReference type="HAMAP-Rule" id="MF_00184"/>
    </source>
</evidence>
<evidence type="ECO:0000255" key="2">
    <source>
        <dbReference type="PROSITE-ProRule" id="PRU01228"/>
    </source>
</evidence>
<comment type="function">
    <text evidence="1">Catalyzes the attachment of threonine to tRNA(Thr) in a two-step reaction: L-threonine is first activated by ATP to form Thr-AMP and then transferred to the acceptor end of tRNA(Thr). Also edits incorrectly charged L-seryl-tRNA(Thr).</text>
</comment>
<comment type="catalytic activity">
    <reaction evidence="1">
        <text>tRNA(Thr) + L-threonine + ATP = L-threonyl-tRNA(Thr) + AMP + diphosphate + H(+)</text>
        <dbReference type="Rhea" id="RHEA:24624"/>
        <dbReference type="Rhea" id="RHEA-COMP:9670"/>
        <dbReference type="Rhea" id="RHEA-COMP:9704"/>
        <dbReference type="ChEBI" id="CHEBI:15378"/>
        <dbReference type="ChEBI" id="CHEBI:30616"/>
        <dbReference type="ChEBI" id="CHEBI:33019"/>
        <dbReference type="ChEBI" id="CHEBI:57926"/>
        <dbReference type="ChEBI" id="CHEBI:78442"/>
        <dbReference type="ChEBI" id="CHEBI:78534"/>
        <dbReference type="ChEBI" id="CHEBI:456215"/>
        <dbReference type="EC" id="6.1.1.3"/>
    </reaction>
</comment>
<comment type="cofactor">
    <cofactor evidence="1">
        <name>Zn(2+)</name>
        <dbReference type="ChEBI" id="CHEBI:29105"/>
    </cofactor>
    <text evidence="1">Binds 1 zinc ion per subunit.</text>
</comment>
<comment type="subunit">
    <text evidence="1">Homodimer.</text>
</comment>
<comment type="subcellular location">
    <subcellularLocation>
        <location evidence="1">Cytoplasm</location>
    </subcellularLocation>
</comment>
<comment type="similarity">
    <text evidence="1">Belongs to the class-II aminoacyl-tRNA synthetase family.</text>
</comment>
<reference key="1">
    <citation type="journal article" date="2005" name="J. Bacteriol.">
        <title>Insights on evolution of virulence and resistance from the complete genome analysis of an early methicillin-resistant Staphylococcus aureus strain and a biofilm-producing methicillin-resistant Staphylococcus epidermidis strain.</title>
        <authorList>
            <person name="Gill S.R."/>
            <person name="Fouts D.E."/>
            <person name="Archer G.L."/>
            <person name="Mongodin E.F."/>
            <person name="DeBoy R.T."/>
            <person name="Ravel J."/>
            <person name="Paulsen I.T."/>
            <person name="Kolonay J.F."/>
            <person name="Brinkac L.M."/>
            <person name="Beanan M.J."/>
            <person name="Dodson R.J."/>
            <person name="Daugherty S.C."/>
            <person name="Madupu R."/>
            <person name="Angiuoli S.V."/>
            <person name="Durkin A.S."/>
            <person name="Haft D.H."/>
            <person name="Vamathevan J.J."/>
            <person name="Khouri H."/>
            <person name="Utterback T.R."/>
            <person name="Lee C."/>
            <person name="Dimitrov G."/>
            <person name="Jiang L."/>
            <person name="Qin H."/>
            <person name="Weidman J."/>
            <person name="Tran K."/>
            <person name="Kang K.H."/>
            <person name="Hance I.R."/>
            <person name="Nelson K.E."/>
            <person name="Fraser C.M."/>
        </authorList>
    </citation>
    <scope>NUCLEOTIDE SEQUENCE [LARGE SCALE GENOMIC DNA]</scope>
    <source>
        <strain>ATCC 35984 / DSM 28319 / BCRC 17069 / CCUG 31568 / BM 3577 / RP62A</strain>
    </source>
</reference>
<feature type="chain" id="PRO_0000101054" description="Threonine--tRNA ligase">
    <location>
        <begin position="1"/>
        <end position="645"/>
    </location>
</feature>
<feature type="domain" description="TGS" evidence="2">
    <location>
        <begin position="1"/>
        <end position="63"/>
    </location>
</feature>
<feature type="region of interest" description="Catalytic" evidence="1">
    <location>
        <begin position="242"/>
        <end position="540"/>
    </location>
</feature>
<feature type="binding site" evidence="1">
    <location>
        <position position="336"/>
    </location>
    <ligand>
        <name>Zn(2+)</name>
        <dbReference type="ChEBI" id="CHEBI:29105"/>
    </ligand>
</feature>
<feature type="binding site" evidence="1">
    <location>
        <position position="387"/>
    </location>
    <ligand>
        <name>Zn(2+)</name>
        <dbReference type="ChEBI" id="CHEBI:29105"/>
    </ligand>
</feature>
<feature type="binding site" evidence="1">
    <location>
        <position position="517"/>
    </location>
    <ligand>
        <name>Zn(2+)</name>
        <dbReference type="ChEBI" id="CHEBI:29105"/>
    </ligand>
</feature>
<organism>
    <name type="scientific">Staphylococcus epidermidis (strain ATCC 35984 / DSM 28319 / BCRC 17069 / CCUG 31568 / BM 3577 / RP62A)</name>
    <dbReference type="NCBI Taxonomy" id="176279"/>
    <lineage>
        <taxon>Bacteria</taxon>
        <taxon>Bacillati</taxon>
        <taxon>Bacillota</taxon>
        <taxon>Bacilli</taxon>
        <taxon>Bacillales</taxon>
        <taxon>Staphylococcaceae</taxon>
        <taxon>Staphylococcus</taxon>
    </lineage>
</organism>
<accession>Q5HNM1</accession>
<dbReference type="EC" id="6.1.1.3" evidence="1"/>
<dbReference type="EMBL" id="CP000029">
    <property type="protein sequence ID" value="AAW54611.1"/>
    <property type="molecule type" value="Genomic_DNA"/>
</dbReference>
<dbReference type="RefSeq" id="WP_002440177.1">
    <property type="nucleotide sequence ID" value="NC_002976.3"/>
</dbReference>
<dbReference type="SMR" id="Q5HNM1"/>
<dbReference type="STRING" id="176279.SERP1246"/>
<dbReference type="GeneID" id="50018528"/>
<dbReference type="KEGG" id="ser:SERP1246"/>
<dbReference type="eggNOG" id="COG0441">
    <property type="taxonomic scope" value="Bacteria"/>
</dbReference>
<dbReference type="HOGENOM" id="CLU_008554_3_2_9"/>
<dbReference type="Proteomes" id="UP000000531">
    <property type="component" value="Chromosome"/>
</dbReference>
<dbReference type="GO" id="GO:0005737">
    <property type="term" value="C:cytoplasm"/>
    <property type="evidence" value="ECO:0007669"/>
    <property type="project" value="UniProtKB-SubCell"/>
</dbReference>
<dbReference type="GO" id="GO:0005524">
    <property type="term" value="F:ATP binding"/>
    <property type="evidence" value="ECO:0007669"/>
    <property type="project" value="UniProtKB-UniRule"/>
</dbReference>
<dbReference type="GO" id="GO:0140096">
    <property type="term" value="F:catalytic activity, acting on a protein"/>
    <property type="evidence" value="ECO:0007669"/>
    <property type="project" value="UniProtKB-ARBA"/>
</dbReference>
<dbReference type="GO" id="GO:0046872">
    <property type="term" value="F:metal ion binding"/>
    <property type="evidence" value="ECO:0007669"/>
    <property type="project" value="UniProtKB-KW"/>
</dbReference>
<dbReference type="GO" id="GO:0004829">
    <property type="term" value="F:threonine-tRNA ligase activity"/>
    <property type="evidence" value="ECO:0007669"/>
    <property type="project" value="UniProtKB-UniRule"/>
</dbReference>
<dbReference type="GO" id="GO:0016740">
    <property type="term" value="F:transferase activity"/>
    <property type="evidence" value="ECO:0007669"/>
    <property type="project" value="UniProtKB-ARBA"/>
</dbReference>
<dbReference type="GO" id="GO:0000049">
    <property type="term" value="F:tRNA binding"/>
    <property type="evidence" value="ECO:0007669"/>
    <property type="project" value="UniProtKB-KW"/>
</dbReference>
<dbReference type="GO" id="GO:0006435">
    <property type="term" value="P:threonyl-tRNA aminoacylation"/>
    <property type="evidence" value="ECO:0007669"/>
    <property type="project" value="UniProtKB-UniRule"/>
</dbReference>
<dbReference type="CDD" id="cd01667">
    <property type="entry name" value="TGS_ThrRS"/>
    <property type="match status" value="1"/>
</dbReference>
<dbReference type="CDD" id="cd00860">
    <property type="entry name" value="ThrRS_anticodon"/>
    <property type="match status" value="1"/>
</dbReference>
<dbReference type="CDD" id="cd00771">
    <property type="entry name" value="ThrRS_core"/>
    <property type="match status" value="1"/>
</dbReference>
<dbReference type="FunFam" id="3.10.20.30:FF:000005">
    <property type="entry name" value="Threonine--tRNA ligase"/>
    <property type="match status" value="1"/>
</dbReference>
<dbReference type="FunFam" id="3.30.54.20:FF:000002">
    <property type="entry name" value="Threonine--tRNA ligase"/>
    <property type="match status" value="1"/>
</dbReference>
<dbReference type="FunFam" id="3.30.930.10:FF:000002">
    <property type="entry name" value="Threonine--tRNA ligase"/>
    <property type="match status" value="1"/>
</dbReference>
<dbReference type="FunFam" id="3.40.50.800:FF:000001">
    <property type="entry name" value="Threonine--tRNA ligase"/>
    <property type="match status" value="1"/>
</dbReference>
<dbReference type="FunFam" id="3.30.980.10:FF:000005">
    <property type="entry name" value="Threonyl-tRNA synthetase, mitochondrial"/>
    <property type="match status" value="1"/>
</dbReference>
<dbReference type="Gene3D" id="3.10.20.30">
    <property type="match status" value="1"/>
</dbReference>
<dbReference type="Gene3D" id="3.30.54.20">
    <property type="match status" value="1"/>
</dbReference>
<dbReference type="Gene3D" id="3.40.50.800">
    <property type="entry name" value="Anticodon-binding domain"/>
    <property type="match status" value="1"/>
</dbReference>
<dbReference type="Gene3D" id="3.30.930.10">
    <property type="entry name" value="Bira Bifunctional Protein, Domain 2"/>
    <property type="match status" value="1"/>
</dbReference>
<dbReference type="Gene3D" id="3.30.980.10">
    <property type="entry name" value="Threonyl-trna Synthetase, Chain A, domain 2"/>
    <property type="match status" value="1"/>
</dbReference>
<dbReference type="HAMAP" id="MF_00184">
    <property type="entry name" value="Thr_tRNA_synth"/>
    <property type="match status" value="1"/>
</dbReference>
<dbReference type="InterPro" id="IPR002314">
    <property type="entry name" value="aa-tRNA-synt_IIb"/>
</dbReference>
<dbReference type="InterPro" id="IPR006195">
    <property type="entry name" value="aa-tRNA-synth_II"/>
</dbReference>
<dbReference type="InterPro" id="IPR045864">
    <property type="entry name" value="aa-tRNA-synth_II/BPL/LPL"/>
</dbReference>
<dbReference type="InterPro" id="IPR004154">
    <property type="entry name" value="Anticodon-bd"/>
</dbReference>
<dbReference type="InterPro" id="IPR036621">
    <property type="entry name" value="Anticodon-bd_dom_sf"/>
</dbReference>
<dbReference type="InterPro" id="IPR012675">
    <property type="entry name" value="Beta-grasp_dom_sf"/>
</dbReference>
<dbReference type="InterPro" id="IPR004095">
    <property type="entry name" value="TGS"/>
</dbReference>
<dbReference type="InterPro" id="IPR012676">
    <property type="entry name" value="TGS-like"/>
</dbReference>
<dbReference type="InterPro" id="IPR002320">
    <property type="entry name" value="Thr-tRNA-ligase_IIa"/>
</dbReference>
<dbReference type="InterPro" id="IPR018163">
    <property type="entry name" value="Thr/Ala-tRNA-synth_IIc_edit"/>
</dbReference>
<dbReference type="InterPro" id="IPR047246">
    <property type="entry name" value="ThrRS_anticodon"/>
</dbReference>
<dbReference type="InterPro" id="IPR033728">
    <property type="entry name" value="ThrRS_core"/>
</dbReference>
<dbReference type="InterPro" id="IPR012947">
    <property type="entry name" value="tRNA_SAD"/>
</dbReference>
<dbReference type="NCBIfam" id="TIGR00418">
    <property type="entry name" value="thrS"/>
    <property type="match status" value="1"/>
</dbReference>
<dbReference type="PANTHER" id="PTHR11451:SF56">
    <property type="entry name" value="THREONINE--TRNA LIGASE 1"/>
    <property type="match status" value="1"/>
</dbReference>
<dbReference type="PANTHER" id="PTHR11451">
    <property type="entry name" value="THREONINE-TRNA LIGASE"/>
    <property type="match status" value="1"/>
</dbReference>
<dbReference type="Pfam" id="PF03129">
    <property type="entry name" value="HGTP_anticodon"/>
    <property type="match status" value="1"/>
</dbReference>
<dbReference type="Pfam" id="PF02824">
    <property type="entry name" value="TGS"/>
    <property type="match status" value="1"/>
</dbReference>
<dbReference type="Pfam" id="PF00587">
    <property type="entry name" value="tRNA-synt_2b"/>
    <property type="match status" value="1"/>
</dbReference>
<dbReference type="Pfam" id="PF07973">
    <property type="entry name" value="tRNA_SAD"/>
    <property type="match status" value="1"/>
</dbReference>
<dbReference type="PRINTS" id="PR01047">
    <property type="entry name" value="TRNASYNTHTHR"/>
</dbReference>
<dbReference type="SMART" id="SM00863">
    <property type="entry name" value="tRNA_SAD"/>
    <property type="match status" value="1"/>
</dbReference>
<dbReference type="SUPFAM" id="SSF52954">
    <property type="entry name" value="Class II aaRS ABD-related"/>
    <property type="match status" value="1"/>
</dbReference>
<dbReference type="SUPFAM" id="SSF55681">
    <property type="entry name" value="Class II aaRS and biotin synthetases"/>
    <property type="match status" value="1"/>
</dbReference>
<dbReference type="SUPFAM" id="SSF81271">
    <property type="entry name" value="TGS-like"/>
    <property type="match status" value="1"/>
</dbReference>
<dbReference type="SUPFAM" id="SSF55186">
    <property type="entry name" value="ThrRS/AlaRS common domain"/>
    <property type="match status" value="1"/>
</dbReference>
<dbReference type="PROSITE" id="PS50862">
    <property type="entry name" value="AA_TRNA_LIGASE_II"/>
    <property type="match status" value="1"/>
</dbReference>
<dbReference type="PROSITE" id="PS51880">
    <property type="entry name" value="TGS"/>
    <property type="match status" value="1"/>
</dbReference>
<gene>
    <name evidence="1" type="primary">thrS</name>
    <name type="ordered locus">SERP1246</name>
</gene>
<sequence>MNQINIQFPDGNTKEFDKGTTTEDIAQSISPGLRKKAVAGKFNGQLVDLTRPLEQDGAIEIITPGSEEALEVLRHSTAHLMAQALKRLYGDVKFGVGPVIEGGFYYDFDMDDKVSSDDFDKIEKTMKQIVNENHKIVREVVSKEKAKDFFKDDPYKLELIDAIPEDESVTLYTQGEFTDLCRGVHVPSTSKIKEFKLLSTAGAYWRGNSDNKMLQRIYGTAFFDKKDLKAHLKMLEERRERDHRKIGKDLELFTNNQLVGAGLPLWLPNGATIRREIERYIVDKEVSMGYDHVYTPVLANVDLYKTSGHWDHYQEDMFPAMKLDEDEAMVLRPMNCPHHMMIYKNKPHSYRELPIRIAELGTMHRYEASGAVSGLQRVRGMTLNDSHIFVRPDQIKEEFKRVVNMIQDVYKDFGFEDYRFRLSYRDPEDKHKYFDDDEMWEKAESMLKEASDELGLTYEEAIGEAAFYGPKLDVQVKTAMGKEETLSTAQLDFLLPERFDLTYIGQDGEQHRPVVIHRGVVSTMERFVAFLTEETKGAFPTWLAPMQVEIIPVNIDLHYDYARLLQDELKSQGVRVEIDDRNEKMGYKIREAQMKKIPYQIVVGDQEVENQEVNVRKYGSEKQESVEKDEFIWNVIDEIRLKKHR</sequence>